<keyword id="KW-0285">Flavoprotein</keyword>
<keyword id="KW-0288">FMN</keyword>
<keyword id="KW-0560">Oxidoreductase</keyword>
<keyword id="KW-0664">Pyridoxine biosynthesis</keyword>
<keyword id="KW-1185">Reference proteome</keyword>
<accession>A1SEM4</accession>
<dbReference type="EC" id="1.4.3.5" evidence="1"/>
<dbReference type="EMBL" id="CP000509">
    <property type="protein sequence ID" value="ABL80259.1"/>
    <property type="molecule type" value="Genomic_DNA"/>
</dbReference>
<dbReference type="RefSeq" id="WP_011754208.1">
    <property type="nucleotide sequence ID" value="NC_008699.1"/>
</dbReference>
<dbReference type="SMR" id="A1SEM4"/>
<dbReference type="STRING" id="196162.Noca_0734"/>
<dbReference type="KEGG" id="nca:Noca_0734"/>
<dbReference type="eggNOG" id="COG0259">
    <property type="taxonomic scope" value="Bacteria"/>
</dbReference>
<dbReference type="HOGENOM" id="CLU_032263_2_2_11"/>
<dbReference type="OrthoDB" id="9780392at2"/>
<dbReference type="UniPathway" id="UPA01068">
    <property type="reaction ID" value="UER00304"/>
</dbReference>
<dbReference type="UniPathway" id="UPA01068">
    <property type="reaction ID" value="UER00305"/>
</dbReference>
<dbReference type="Proteomes" id="UP000000640">
    <property type="component" value="Chromosome"/>
</dbReference>
<dbReference type="GO" id="GO:0010181">
    <property type="term" value="F:FMN binding"/>
    <property type="evidence" value="ECO:0007669"/>
    <property type="project" value="UniProtKB-UniRule"/>
</dbReference>
<dbReference type="GO" id="GO:0004733">
    <property type="term" value="F:pyridoxamine phosphate oxidase activity"/>
    <property type="evidence" value="ECO:0007669"/>
    <property type="project" value="UniProtKB-UniRule"/>
</dbReference>
<dbReference type="GO" id="GO:0008615">
    <property type="term" value="P:pyridoxine biosynthetic process"/>
    <property type="evidence" value="ECO:0007669"/>
    <property type="project" value="UniProtKB-KW"/>
</dbReference>
<dbReference type="FunFam" id="2.30.110.10:FF:000020">
    <property type="entry name" value="PNPO isoform 11"/>
    <property type="match status" value="1"/>
</dbReference>
<dbReference type="Gene3D" id="2.30.110.10">
    <property type="entry name" value="Electron Transport, Fmn-binding Protein, Chain A"/>
    <property type="match status" value="1"/>
</dbReference>
<dbReference type="HAMAP" id="MF_01629">
    <property type="entry name" value="PdxH"/>
    <property type="match status" value="1"/>
</dbReference>
<dbReference type="InterPro" id="IPR000659">
    <property type="entry name" value="Pyridox_Oxase"/>
</dbReference>
<dbReference type="InterPro" id="IPR019740">
    <property type="entry name" value="Pyridox_Oxase_CS"/>
</dbReference>
<dbReference type="InterPro" id="IPR011576">
    <property type="entry name" value="Pyridox_Oxase_N"/>
</dbReference>
<dbReference type="InterPro" id="IPR019576">
    <property type="entry name" value="Pyridoxamine_oxidase_dimer_C"/>
</dbReference>
<dbReference type="InterPro" id="IPR012349">
    <property type="entry name" value="Split_barrel_FMN-bd"/>
</dbReference>
<dbReference type="NCBIfam" id="TIGR00558">
    <property type="entry name" value="pdxH"/>
    <property type="match status" value="1"/>
</dbReference>
<dbReference type="NCBIfam" id="NF004231">
    <property type="entry name" value="PRK05679.1"/>
    <property type="match status" value="1"/>
</dbReference>
<dbReference type="PANTHER" id="PTHR10851:SF0">
    <property type="entry name" value="PYRIDOXINE-5'-PHOSPHATE OXIDASE"/>
    <property type="match status" value="1"/>
</dbReference>
<dbReference type="PANTHER" id="PTHR10851">
    <property type="entry name" value="PYRIDOXINE-5-PHOSPHATE OXIDASE"/>
    <property type="match status" value="1"/>
</dbReference>
<dbReference type="Pfam" id="PF10590">
    <property type="entry name" value="PNP_phzG_C"/>
    <property type="match status" value="1"/>
</dbReference>
<dbReference type="Pfam" id="PF01243">
    <property type="entry name" value="PNPOx_N"/>
    <property type="match status" value="1"/>
</dbReference>
<dbReference type="PIRSF" id="PIRSF000190">
    <property type="entry name" value="Pyd_amn-ph_oxd"/>
    <property type="match status" value="1"/>
</dbReference>
<dbReference type="SUPFAM" id="SSF50475">
    <property type="entry name" value="FMN-binding split barrel"/>
    <property type="match status" value="1"/>
</dbReference>
<dbReference type="PROSITE" id="PS01064">
    <property type="entry name" value="PYRIDOX_OXIDASE"/>
    <property type="match status" value="1"/>
</dbReference>
<reference key="1">
    <citation type="submission" date="2006-12" db="EMBL/GenBank/DDBJ databases">
        <title>Complete sequence of chromosome 1 of Nocardioides sp. JS614.</title>
        <authorList>
            <person name="Copeland A."/>
            <person name="Lucas S."/>
            <person name="Lapidus A."/>
            <person name="Barry K."/>
            <person name="Detter J.C."/>
            <person name="Glavina del Rio T."/>
            <person name="Hammon N."/>
            <person name="Israni S."/>
            <person name="Dalin E."/>
            <person name="Tice H."/>
            <person name="Pitluck S."/>
            <person name="Thompson L.S."/>
            <person name="Brettin T."/>
            <person name="Bruce D."/>
            <person name="Han C."/>
            <person name="Tapia R."/>
            <person name="Schmutz J."/>
            <person name="Larimer F."/>
            <person name="Land M."/>
            <person name="Hauser L."/>
            <person name="Kyrpides N."/>
            <person name="Kim E."/>
            <person name="Mattes T."/>
            <person name="Gossett J."/>
            <person name="Richardson P."/>
        </authorList>
    </citation>
    <scope>NUCLEOTIDE SEQUENCE [LARGE SCALE GENOMIC DNA]</scope>
    <source>
        <strain>ATCC BAA-499 / JS614</strain>
    </source>
</reference>
<comment type="function">
    <text evidence="1">Catalyzes the oxidation of either pyridoxine 5'-phosphate (PNP) or pyridoxamine 5'-phosphate (PMP) into pyridoxal 5'-phosphate (PLP).</text>
</comment>
<comment type="catalytic activity">
    <reaction evidence="1">
        <text>pyridoxamine 5'-phosphate + O2 + H2O = pyridoxal 5'-phosphate + H2O2 + NH4(+)</text>
        <dbReference type="Rhea" id="RHEA:15817"/>
        <dbReference type="ChEBI" id="CHEBI:15377"/>
        <dbReference type="ChEBI" id="CHEBI:15379"/>
        <dbReference type="ChEBI" id="CHEBI:16240"/>
        <dbReference type="ChEBI" id="CHEBI:28938"/>
        <dbReference type="ChEBI" id="CHEBI:58451"/>
        <dbReference type="ChEBI" id="CHEBI:597326"/>
        <dbReference type="EC" id="1.4.3.5"/>
    </reaction>
</comment>
<comment type="catalytic activity">
    <reaction evidence="1">
        <text>pyridoxine 5'-phosphate + O2 = pyridoxal 5'-phosphate + H2O2</text>
        <dbReference type="Rhea" id="RHEA:15149"/>
        <dbReference type="ChEBI" id="CHEBI:15379"/>
        <dbReference type="ChEBI" id="CHEBI:16240"/>
        <dbReference type="ChEBI" id="CHEBI:58589"/>
        <dbReference type="ChEBI" id="CHEBI:597326"/>
        <dbReference type="EC" id="1.4.3.5"/>
    </reaction>
</comment>
<comment type="cofactor">
    <cofactor evidence="1">
        <name>FMN</name>
        <dbReference type="ChEBI" id="CHEBI:58210"/>
    </cofactor>
    <text evidence="1">Binds 1 FMN per subunit.</text>
</comment>
<comment type="pathway">
    <text evidence="1">Cofactor metabolism; pyridoxal 5'-phosphate salvage; pyridoxal 5'-phosphate from pyridoxamine 5'-phosphate: step 1/1.</text>
</comment>
<comment type="pathway">
    <text evidence="1">Cofactor metabolism; pyridoxal 5'-phosphate salvage; pyridoxal 5'-phosphate from pyridoxine 5'-phosphate: step 1/1.</text>
</comment>
<comment type="subunit">
    <text evidence="1">Homodimer.</text>
</comment>
<comment type="similarity">
    <text evidence="1">Belongs to the pyridoxamine 5'-phosphate oxidase family.</text>
</comment>
<proteinExistence type="inferred from homology"/>
<feature type="chain" id="PRO_0000292311" description="Pyridoxine/pyridoxamine 5'-phosphate oxidase">
    <location>
        <begin position="1"/>
        <end position="213"/>
    </location>
</feature>
<feature type="binding site" evidence="1">
    <location>
        <begin position="10"/>
        <end position="13"/>
    </location>
    <ligand>
        <name>substrate</name>
    </ligand>
</feature>
<feature type="binding site" evidence="1">
    <location>
        <begin position="63"/>
        <end position="68"/>
    </location>
    <ligand>
        <name>FMN</name>
        <dbReference type="ChEBI" id="CHEBI:58210"/>
    </ligand>
</feature>
<feature type="binding site" evidence="1">
    <location>
        <position position="68"/>
    </location>
    <ligand>
        <name>substrate</name>
    </ligand>
</feature>
<feature type="binding site" evidence="1">
    <location>
        <begin position="78"/>
        <end position="79"/>
    </location>
    <ligand>
        <name>FMN</name>
        <dbReference type="ChEBI" id="CHEBI:58210"/>
    </ligand>
</feature>
<feature type="binding site" evidence="1">
    <location>
        <position position="85"/>
    </location>
    <ligand>
        <name>FMN</name>
        <dbReference type="ChEBI" id="CHEBI:58210"/>
    </ligand>
</feature>
<feature type="binding site" evidence="1">
    <location>
        <position position="107"/>
    </location>
    <ligand>
        <name>FMN</name>
        <dbReference type="ChEBI" id="CHEBI:58210"/>
    </ligand>
</feature>
<feature type="binding site" evidence="1">
    <location>
        <position position="125"/>
    </location>
    <ligand>
        <name>substrate</name>
    </ligand>
</feature>
<feature type="binding site" evidence="1">
    <location>
        <position position="129"/>
    </location>
    <ligand>
        <name>substrate</name>
    </ligand>
</feature>
<feature type="binding site" evidence="1">
    <location>
        <position position="133"/>
    </location>
    <ligand>
        <name>substrate</name>
    </ligand>
</feature>
<feature type="binding site" evidence="1">
    <location>
        <begin position="142"/>
        <end position="143"/>
    </location>
    <ligand>
        <name>FMN</name>
        <dbReference type="ChEBI" id="CHEBI:58210"/>
    </ligand>
</feature>
<feature type="binding site" evidence="1">
    <location>
        <position position="186"/>
    </location>
    <ligand>
        <name>FMN</name>
        <dbReference type="ChEBI" id="CHEBI:58210"/>
    </ligand>
</feature>
<feature type="binding site" evidence="1">
    <location>
        <begin position="192"/>
        <end position="194"/>
    </location>
    <ligand>
        <name>substrate</name>
    </ligand>
</feature>
<feature type="binding site" evidence="1">
    <location>
        <position position="196"/>
    </location>
    <ligand>
        <name>FMN</name>
        <dbReference type="ChEBI" id="CHEBI:58210"/>
    </ligand>
</feature>
<evidence type="ECO:0000255" key="1">
    <source>
        <dbReference type="HAMAP-Rule" id="MF_01629"/>
    </source>
</evidence>
<sequence length="213" mass="23611">MGHLDLAALREEYARAGLDEADLAPDPIAMFDRWMGEAHDAIRHDANAMVLSTVGPDLAPSSRMLLLKGVAEDGFVFFTNTASLKGHELAANPRCSLLFPWHPLERQVRVDGVAAPLPRADVEAYFASRPRASQLGAWASHQSEVVSGRAELEAAYAAAEVRYPDQVPTPEEWGGYVVRPEVVEFWQGRTGRLHDRLRYRRTPGGWVTERLAP</sequence>
<name>PDXH_NOCSJ</name>
<gene>
    <name evidence="1" type="primary">pdxH</name>
    <name type="ordered locus">Noca_0734</name>
</gene>
<organism>
    <name type="scientific">Nocardioides sp. (strain ATCC BAA-499 / JS614)</name>
    <dbReference type="NCBI Taxonomy" id="196162"/>
    <lineage>
        <taxon>Bacteria</taxon>
        <taxon>Bacillati</taxon>
        <taxon>Actinomycetota</taxon>
        <taxon>Actinomycetes</taxon>
        <taxon>Propionibacteriales</taxon>
        <taxon>Nocardioidaceae</taxon>
        <taxon>Nocardioides</taxon>
    </lineage>
</organism>
<protein>
    <recommendedName>
        <fullName evidence="1">Pyridoxine/pyridoxamine 5'-phosphate oxidase</fullName>
        <ecNumber evidence="1">1.4.3.5</ecNumber>
    </recommendedName>
    <alternativeName>
        <fullName evidence="1">PNP/PMP oxidase</fullName>
        <shortName evidence="1">PNPOx</shortName>
    </alternativeName>
    <alternativeName>
        <fullName evidence="1">Pyridoxal 5'-phosphate synthase</fullName>
    </alternativeName>
</protein>